<proteinExistence type="evidence at transcript level"/>
<sequence length="447" mass="50954">MEMGNQHPSISRLQEIQKEVKSIEQQVLGFSGLSDDKNYKKLERILTKQLFEIDSVDTEGKGDIQQARKRAAQETERLLKELEQNANHPHRLEIQNIFQEAQALVKEKVVPFYNGGNCVTDEFEEGIQDVILRLTHVKTGGKVSLRKARYHTLTKICAVQEIIENCMKKQPSLPLSEDAHPSVAKINSVMCEVNKTRGTLIALLMGVNNKETCRHLSCVLSGLMADLDALDVCGHTEIRNYRKEVVEDINQLLRYLDLEEEADTTHAFDLGQNHSILKIEKVLKRMREIKTELLQAQNPPELYLSAKTELQGLIGQLDEVSLEKNPCIREARRRAVIEVQTLITYIDLKEALEKRKLLACEEHPSHKAVWDVLGNLSEIQGEVLSFDGNRTDKNYIRLEELLTKQLLALDAVDPQGEEKCKAARKQAVKLAQNILSYLDLKSDEWEY</sequence>
<organism>
    <name type="scientific">Bos taurus</name>
    <name type="common">Bovine</name>
    <dbReference type="NCBI Taxonomy" id="9913"/>
    <lineage>
        <taxon>Eukaryota</taxon>
        <taxon>Metazoa</taxon>
        <taxon>Chordata</taxon>
        <taxon>Craniata</taxon>
        <taxon>Vertebrata</taxon>
        <taxon>Euteleostomi</taxon>
        <taxon>Mammalia</taxon>
        <taxon>Eutheria</taxon>
        <taxon>Laurasiatheria</taxon>
        <taxon>Artiodactyla</taxon>
        <taxon>Ruminantia</taxon>
        <taxon>Pecora</taxon>
        <taxon>Bovidae</taxon>
        <taxon>Bovinae</taxon>
        <taxon>Bos</taxon>
    </lineage>
</organism>
<reference key="1">
    <citation type="submission" date="2005-04" db="EMBL/GenBank/DDBJ databases">
        <title>Expression of BAG5 in bovine placenta.</title>
        <authorList>
            <person name="Ushizawa K."/>
            <person name="Takahashi T."/>
            <person name="Hosoe M."/>
            <person name="Hashizume K."/>
        </authorList>
    </citation>
    <scope>NUCLEOTIDE SEQUENCE [MRNA]</scope>
    <source>
        <tissue>Placenta</tissue>
    </source>
</reference>
<reference key="2">
    <citation type="submission" date="2005-12" db="EMBL/GenBank/DDBJ databases">
        <authorList>
            <consortium name="NIH - Mammalian Gene Collection (MGC) project"/>
        </authorList>
    </citation>
    <scope>NUCLEOTIDE SEQUENCE [LARGE SCALE MRNA]</scope>
    <source>
        <strain>Crossbred X Angus</strain>
        <tissue>Liver</tissue>
    </source>
</reference>
<feature type="chain" id="PRO_0000282860" description="BAG family molecular chaperone regulator 5">
    <location>
        <begin position="1"/>
        <end position="447"/>
    </location>
</feature>
<feature type="domain" description="BAG 1" evidence="5">
    <location>
        <begin position="9"/>
        <end position="86"/>
    </location>
</feature>
<feature type="domain" description="BAG 2" evidence="5">
    <location>
        <begin position="95"/>
        <end position="167"/>
    </location>
</feature>
<feature type="domain" description="BAG 3" evidence="5">
    <location>
        <begin position="182"/>
        <end position="260"/>
    </location>
</feature>
<feature type="domain" description="BAG 4" evidence="5">
    <location>
        <begin position="275"/>
        <end position="350"/>
    </location>
</feature>
<feature type="domain" description="BAG 5" evidence="5">
    <location>
        <begin position="365"/>
        <end position="442"/>
    </location>
</feature>
<gene>
    <name type="primary">BAG5</name>
</gene>
<keyword id="KW-0143">Chaperone</keyword>
<keyword id="KW-1185">Reference proteome</keyword>
<keyword id="KW-0677">Repeat</keyword>
<comment type="function">
    <text evidence="2 3 4">Co-chaperone for HSP/HSP70 proteins. It functions as a nucleotide-exchange factor promoting the release of ADP from HSP70, thereby activating Hsp70-mediated protein refolding (By similarity). Has an essential role in maintaining proteostasis at junctional membrane complexes (JMC), where it may function as a scaffold between the HSPA8 chaperone and JMC proteins enabling correct, HSPA8-dependent JMC protein folding (By similarity). Inhibits both auto-ubiquitination of PRKN and ubiquitination of target proteins by PRKN (By similarity).</text>
</comment>
<comment type="subunit">
    <text evidence="1 3 4">Binds to the ATPase domain of HSP/HSP70 chaperones. Binds PRKN (By similarity). Interacts complex with HSPA8 and JPH2 (By similarity).</text>
</comment>
<comment type="subcellular location">
    <text evidence="3">In cardiomyocytes, localized at specialized membrane contact sites between T-tubules and the sarcoplasmic reticulum, known as junctional membrane complexes.</text>
</comment>
<comment type="domain">
    <text evidence="1">The fifth BAG domain is responsible for the interaction with HSP70 nucleotide-binding domain.</text>
</comment>
<dbReference type="EMBL" id="AB211978">
    <property type="protein sequence ID" value="BAE94654.1"/>
    <property type="molecule type" value="mRNA"/>
</dbReference>
<dbReference type="EMBL" id="BC111177">
    <property type="protein sequence ID" value="AAI11178.1"/>
    <property type="molecule type" value="mRNA"/>
</dbReference>
<dbReference type="RefSeq" id="NP_001035634.1">
    <property type="nucleotide sequence ID" value="NM_001040544.2"/>
</dbReference>
<dbReference type="RefSeq" id="XP_005222261.1">
    <property type="nucleotide sequence ID" value="XM_005222204.5"/>
</dbReference>
<dbReference type="RefSeq" id="XP_010815554.1">
    <property type="nucleotide sequence ID" value="XM_010817252.4"/>
</dbReference>
<dbReference type="RefSeq" id="XP_059735048.1">
    <property type="nucleotide sequence ID" value="XM_059879065.1"/>
</dbReference>
<dbReference type="SMR" id="Q2TA08"/>
<dbReference type="FunCoup" id="Q2TA08">
    <property type="interactions" value="2483"/>
</dbReference>
<dbReference type="PaxDb" id="9913-ENSBTAP00000023084"/>
<dbReference type="Ensembl" id="ENSBTAT00000090954.1">
    <property type="protein sequence ID" value="ENSBTAP00000101902.1"/>
    <property type="gene ID" value="ENSBTAG00000058752.1"/>
</dbReference>
<dbReference type="Ensembl" id="ENSBTAT00000100724.1">
    <property type="protein sequence ID" value="ENSBTAP00000100174.1"/>
    <property type="gene ID" value="ENSBTAG00000058752.1"/>
</dbReference>
<dbReference type="Ensembl" id="ENSBTAT00000107856.1">
    <property type="protein sequence ID" value="ENSBTAP00000075574.1"/>
    <property type="gene ID" value="ENSBTAG00000058752.1"/>
</dbReference>
<dbReference type="Ensembl" id="ENSBTAT00000115725.1">
    <property type="protein sequence ID" value="ENSBTAP00000080151.1"/>
    <property type="gene ID" value="ENSBTAG00000058752.1"/>
</dbReference>
<dbReference type="GeneID" id="522854"/>
<dbReference type="KEGG" id="bta:522854"/>
<dbReference type="CTD" id="9529"/>
<dbReference type="eggNOG" id="KOG4361">
    <property type="taxonomic scope" value="Eukaryota"/>
</dbReference>
<dbReference type="GeneTree" id="ENSGT00940000158888"/>
<dbReference type="HOGENOM" id="CLU_579940_0_0_1"/>
<dbReference type="InParanoid" id="Q2TA08"/>
<dbReference type="OrthoDB" id="417450at2759"/>
<dbReference type="TreeFam" id="TF102014"/>
<dbReference type="Proteomes" id="UP000009136">
    <property type="component" value="Chromosome 21"/>
</dbReference>
<dbReference type="GO" id="GO:0005737">
    <property type="term" value="C:cytoplasm"/>
    <property type="evidence" value="ECO:0000318"/>
    <property type="project" value="GO_Central"/>
</dbReference>
<dbReference type="GO" id="GO:0005829">
    <property type="term" value="C:cytosol"/>
    <property type="evidence" value="ECO:0000318"/>
    <property type="project" value="GO_Central"/>
</dbReference>
<dbReference type="GO" id="GO:0016234">
    <property type="term" value="C:inclusion body"/>
    <property type="evidence" value="ECO:0007669"/>
    <property type="project" value="Ensembl"/>
</dbReference>
<dbReference type="GO" id="GO:0030314">
    <property type="term" value="C:junctional membrane complex"/>
    <property type="evidence" value="ECO:0000250"/>
    <property type="project" value="UniProtKB"/>
</dbReference>
<dbReference type="GO" id="GO:0016020">
    <property type="term" value="C:membrane"/>
    <property type="evidence" value="ECO:0000318"/>
    <property type="project" value="GO_Central"/>
</dbReference>
<dbReference type="GO" id="GO:0005739">
    <property type="term" value="C:mitochondrion"/>
    <property type="evidence" value="ECO:0007669"/>
    <property type="project" value="Ensembl"/>
</dbReference>
<dbReference type="GO" id="GO:0005634">
    <property type="term" value="C:nucleus"/>
    <property type="evidence" value="ECO:0000318"/>
    <property type="project" value="GO_Central"/>
</dbReference>
<dbReference type="GO" id="GO:0048471">
    <property type="term" value="C:perinuclear region of cytoplasm"/>
    <property type="evidence" value="ECO:0007669"/>
    <property type="project" value="Ensembl"/>
</dbReference>
<dbReference type="GO" id="GO:0000774">
    <property type="term" value="F:adenyl-nucleotide exchange factor activity"/>
    <property type="evidence" value="ECO:0000318"/>
    <property type="project" value="GO_Central"/>
</dbReference>
<dbReference type="GO" id="GO:0019901">
    <property type="term" value="F:protein kinase binding"/>
    <property type="evidence" value="ECO:0007669"/>
    <property type="project" value="Ensembl"/>
</dbReference>
<dbReference type="GO" id="GO:0051087">
    <property type="term" value="F:protein-folding chaperone binding"/>
    <property type="evidence" value="ECO:0000318"/>
    <property type="project" value="GO_Central"/>
</dbReference>
<dbReference type="GO" id="GO:0031625">
    <property type="term" value="F:ubiquitin protein ligase binding"/>
    <property type="evidence" value="ECO:0007669"/>
    <property type="project" value="Ensembl"/>
</dbReference>
<dbReference type="GO" id="GO:0007030">
    <property type="term" value="P:Golgi organization"/>
    <property type="evidence" value="ECO:0007669"/>
    <property type="project" value="Ensembl"/>
</dbReference>
<dbReference type="GO" id="GO:0010977">
    <property type="term" value="P:negative regulation of neuron projection development"/>
    <property type="evidence" value="ECO:0007669"/>
    <property type="project" value="Ensembl"/>
</dbReference>
<dbReference type="GO" id="GO:1902176">
    <property type="term" value="P:negative regulation of oxidative stress-induced intrinsic apoptotic signaling pathway"/>
    <property type="evidence" value="ECO:0007669"/>
    <property type="project" value="Ensembl"/>
</dbReference>
<dbReference type="GO" id="GO:0032435">
    <property type="term" value="P:negative regulation of proteasomal ubiquitin-dependent protein catabolic process"/>
    <property type="evidence" value="ECO:0007669"/>
    <property type="project" value="Ensembl"/>
</dbReference>
<dbReference type="GO" id="GO:0031397">
    <property type="term" value="P:negative regulation of protein ubiquitination"/>
    <property type="evidence" value="ECO:0000318"/>
    <property type="project" value="GO_Central"/>
</dbReference>
<dbReference type="GO" id="GO:0050821">
    <property type="term" value="P:protein stabilization"/>
    <property type="evidence" value="ECO:0000318"/>
    <property type="project" value="GO_Central"/>
</dbReference>
<dbReference type="GO" id="GO:0090083">
    <property type="term" value="P:regulation of inclusion body assembly"/>
    <property type="evidence" value="ECO:0000318"/>
    <property type="project" value="GO_Central"/>
</dbReference>
<dbReference type="FunFam" id="1.20.58.120:FF:000002">
    <property type="entry name" value="BAG family molecular chaperone regulator 5"/>
    <property type="match status" value="1"/>
</dbReference>
<dbReference type="FunFam" id="1.20.58.120:FF:000003">
    <property type="entry name" value="BAG family molecular chaperone regulator 5"/>
    <property type="match status" value="1"/>
</dbReference>
<dbReference type="FunFam" id="1.20.58.120:FF:000004">
    <property type="entry name" value="BAG family molecular chaperone regulator 5"/>
    <property type="match status" value="1"/>
</dbReference>
<dbReference type="FunFam" id="1.20.58.120:FF:000009">
    <property type="entry name" value="BAG family molecular chaperone regulator 5"/>
    <property type="match status" value="1"/>
</dbReference>
<dbReference type="Gene3D" id="1.20.58.120">
    <property type="entry name" value="BAG domain"/>
    <property type="match status" value="5"/>
</dbReference>
<dbReference type="InterPro" id="IPR039773">
    <property type="entry name" value="BAG_chaperone_regulator"/>
</dbReference>
<dbReference type="InterPro" id="IPR036533">
    <property type="entry name" value="BAG_dom_sf"/>
</dbReference>
<dbReference type="InterPro" id="IPR003103">
    <property type="entry name" value="BAG_domain"/>
</dbReference>
<dbReference type="PANTHER" id="PTHR12329:SF2">
    <property type="entry name" value="BAG FAMILY MOLECULAR CHAPERONE REGULATOR 5"/>
    <property type="match status" value="1"/>
</dbReference>
<dbReference type="PANTHER" id="PTHR12329">
    <property type="entry name" value="BCL2-ASSOCIATED ATHANOGENE"/>
    <property type="match status" value="1"/>
</dbReference>
<dbReference type="Pfam" id="PF02179">
    <property type="entry name" value="BAG"/>
    <property type="match status" value="4"/>
</dbReference>
<dbReference type="SMART" id="SM00264">
    <property type="entry name" value="BAG"/>
    <property type="match status" value="4"/>
</dbReference>
<dbReference type="SUPFAM" id="SSF63491">
    <property type="entry name" value="BAG domain"/>
    <property type="match status" value="4"/>
</dbReference>
<dbReference type="PROSITE" id="PS51035">
    <property type="entry name" value="BAG"/>
    <property type="match status" value="4"/>
</dbReference>
<protein>
    <recommendedName>
        <fullName>BAG family molecular chaperone regulator 5</fullName>
        <shortName>BAG-5</shortName>
    </recommendedName>
    <alternativeName>
        <fullName>Bcl-2-associated athanogene 5</fullName>
    </alternativeName>
</protein>
<evidence type="ECO:0000250" key="1"/>
<evidence type="ECO:0000250" key="2">
    <source>
        <dbReference type="UniProtKB" id="Q5QJC9"/>
    </source>
</evidence>
<evidence type="ECO:0000250" key="3">
    <source>
        <dbReference type="UniProtKB" id="Q8CI32"/>
    </source>
</evidence>
<evidence type="ECO:0000250" key="4">
    <source>
        <dbReference type="UniProtKB" id="Q9UL15"/>
    </source>
</evidence>
<evidence type="ECO:0000255" key="5">
    <source>
        <dbReference type="PROSITE-ProRule" id="PRU00369"/>
    </source>
</evidence>
<name>BAG5_BOVIN</name>
<accession>Q2TA08</accession>